<feature type="chain" id="PRO_1000019669" description="Serine--tRNA ligase">
    <location>
        <begin position="1"/>
        <end position="427"/>
    </location>
</feature>
<feature type="binding site" evidence="1">
    <location>
        <begin position="229"/>
        <end position="231"/>
    </location>
    <ligand>
        <name>L-serine</name>
        <dbReference type="ChEBI" id="CHEBI:33384"/>
    </ligand>
</feature>
<feature type="binding site" evidence="1">
    <location>
        <begin position="260"/>
        <end position="262"/>
    </location>
    <ligand>
        <name>ATP</name>
        <dbReference type="ChEBI" id="CHEBI:30616"/>
    </ligand>
</feature>
<feature type="binding site" evidence="1">
    <location>
        <position position="283"/>
    </location>
    <ligand>
        <name>L-serine</name>
        <dbReference type="ChEBI" id="CHEBI:33384"/>
    </ligand>
</feature>
<feature type="binding site" evidence="1">
    <location>
        <begin position="347"/>
        <end position="350"/>
    </location>
    <ligand>
        <name>ATP</name>
        <dbReference type="ChEBI" id="CHEBI:30616"/>
    </ligand>
</feature>
<feature type="binding site" evidence="1">
    <location>
        <position position="383"/>
    </location>
    <ligand>
        <name>L-serine</name>
        <dbReference type="ChEBI" id="CHEBI:33384"/>
    </ligand>
</feature>
<evidence type="ECO:0000255" key="1">
    <source>
        <dbReference type="HAMAP-Rule" id="MF_00176"/>
    </source>
</evidence>
<dbReference type="EC" id="6.1.1.11" evidence="1"/>
<dbReference type="EMBL" id="CP000112">
    <property type="protein sequence ID" value="ABB36997.1"/>
    <property type="molecule type" value="Genomic_DNA"/>
</dbReference>
<dbReference type="RefSeq" id="WP_011366354.1">
    <property type="nucleotide sequence ID" value="NC_007519.1"/>
</dbReference>
<dbReference type="SMR" id="Q316Z9"/>
<dbReference type="STRING" id="207559.Dde_0196"/>
<dbReference type="KEGG" id="dde:Dde_0196"/>
<dbReference type="eggNOG" id="COG0172">
    <property type="taxonomic scope" value="Bacteria"/>
</dbReference>
<dbReference type="HOGENOM" id="CLU_023797_1_1_7"/>
<dbReference type="UniPathway" id="UPA00906">
    <property type="reaction ID" value="UER00895"/>
</dbReference>
<dbReference type="Proteomes" id="UP000002710">
    <property type="component" value="Chromosome"/>
</dbReference>
<dbReference type="GO" id="GO:0005737">
    <property type="term" value="C:cytoplasm"/>
    <property type="evidence" value="ECO:0007669"/>
    <property type="project" value="UniProtKB-SubCell"/>
</dbReference>
<dbReference type="GO" id="GO:0005524">
    <property type="term" value="F:ATP binding"/>
    <property type="evidence" value="ECO:0007669"/>
    <property type="project" value="UniProtKB-UniRule"/>
</dbReference>
<dbReference type="GO" id="GO:0004828">
    <property type="term" value="F:serine-tRNA ligase activity"/>
    <property type="evidence" value="ECO:0007669"/>
    <property type="project" value="UniProtKB-UniRule"/>
</dbReference>
<dbReference type="GO" id="GO:0016260">
    <property type="term" value="P:selenocysteine biosynthetic process"/>
    <property type="evidence" value="ECO:0007669"/>
    <property type="project" value="UniProtKB-UniRule"/>
</dbReference>
<dbReference type="GO" id="GO:0006434">
    <property type="term" value="P:seryl-tRNA aminoacylation"/>
    <property type="evidence" value="ECO:0007669"/>
    <property type="project" value="UniProtKB-UniRule"/>
</dbReference>
<dbReference type="CDD" id="cd00770">
    <property type="entry name" value="SerRS_core"/>
    <property type="match status" value="1"/>
</dbReference>
<dbReference type="Gene3D" id="3.30.930.10">
    <property type="entry name" value="Bira Bifunctional Protein, Domain 2"/>
    <property type="match status" value="1"/>
</dbReference>
<dbReference type="Gene3D" id="1.10.287.40">
    <property type="entry name" value="Serine-tRNA synthetase, tRNA binding domain"/>
    <property type="match status" value="1"/>
</dbReference>
<dbReference type="HAMAP" id="MF_00176">
    <property type="entry name" value="Ser_tRNA_synth_type1"/>
    <property type="match status" value="1"/>
</dbReference>
<dbReference type="InterPro" id="IPR002314">
    <property type="entry name" value="aa-tRNA-synt_IIb"/>
</dbReference>
<dbReference type="InterPro" id="IPR006195">
    <property type="entry name" value="aa-tRNA-synth_II"/>
</dbReference>
<dbReference type="InterPro" id="IPR045864">
    <property type="entry name" value="aa-tRNA-synth_II/BPL/LPL"/>
</dbReference>
<dbReference type="InterPro" id="IPR002317">
    <property type="entry name" value="Ser-tRNA-ligase_type_1"/>
</dbReference>
<dbReference type="InterPro" id="IPR015866">
    <property type="entry name" value="Ser-tRNA-synth_1_N"/>
</dbReference>
<dbReference type="InterPro" id="IPR042103">
    <property type="entry name" value="SerRS_1_N_sf"/>
</dbReference>
<dbReference type="InterPro" id="IPR033729">
    <property type="entry name" value="SerRS_core"/>
</dbReference>
<dbReference type="InterPro" id="IPR010978">
    <property type="entry name" value="tRNA-bd_arm"/>
</dbReference>
<dbReference type="NCBIfam" id="TIGR00414">
    <property type="entry name" value="serS"/>
    <property type="match status" value="1"/>
</dbReference>
<dbReference type="PANTHER" id="PTHR43697:SF1">
    <property type="entry name" value="SERINE--TRNA LIGASE"/>
    <property type="match status" value="1"/>
</dbReference>
<dbReference type="PANTHER" id="PTHR43697">
    <property type="entry name" value="SERYL-TRNA SYNTHETASE"/>
    <property type="match status" value="1"/>
</dbReference>
<dbReference type="Pfam" id="PF02403">
    <property type="entry name" value="Seryl_tRNA_N"/>
    <property type="match status" value="1"/>
</dbReference>
<dbReference type="Pfam" id="PF00587">
    <property type="entry name" value="tRNA-synt_2b"/>
    <property type="match status" value="1"/>
</dbReference>
<dbReference type="PIRSF" id="PIRSF001529">
    <property type="entry name" value="Ser-tRNA-synth_IIa"/>
    <property type="match status" value="1"/>
</dbReference>
<dbReference type="PRINTS" id="PR00981">
    <property type="entry name" value="TRNASYNTHSER"/>
</dbReference>
<dbReference type="SUPFAM" id="SSF55681">
    <property type="entry name" value="Class II aaRS and biotin synthetases"/>
    <property type="match status" value="1"/>
</dbReference>
<dbReference type="SUPFAM" id="SSF46589">
    <property type="entry name" value="tRNA-binding arm"/>
    <property type="match status" value="1"/>
</dbReference>
<dbReference type="PROSITE" id="PS50862">
    <property type="entry name" value="AA_TRNA_LIGASE_II"/>
    <property type="match status" value="1"/>
</dbReference>
<name>SYS_OLEA2</name>
<keyword id="KW-0030">Aminoacyl-tRNA synthetase</keyword>
<keyword id="KW-0067">ATP-binding</keyword>
<keyword id="KW-0963">Cytoplasm</keyword>
<keyword id="KW-0436">Ligase</keyword>
<keyword id="KW-0547">Nucleotide-binding</keyword>
<keyword id="KW-0648">Protein biosynthesis</keyword>
<keyword id="KW-1185">Reference proteome</keyword>
<proteinExistence type="inferred from homology"/>
<accession>Q316Z9</accession>
<protein>
    <recommendedName>
        <fullName evidence="1">Serine--tRNA ligase</fullName>
        <ecNumber evidence="1">6.1.1.11</ecNumber>
    </recommendedName>
    <alternativeName>
        <fullName evidence="1">Seryl-tRNA synthetase</fullName>
        <shortName evidence="1">SerRS</shortName>
    </alternativeName>
    <alternativeName>
        <fullName evidence="1">Seryl-tRNA(Ser/Sec) synthetase</fullName>
    </alternativeName>
</protein>
<reference key="1">
    <citation type="journal article" date="2011" name="J. Bacteriol.">
        <title>Complete genome sequence and updated annotation of Desulfovibrio alaskensis G20.</title>
        <authorList>
            <person name="Hauser L.J."/>
            <person name="Land M.L."/>
            <person name="Brown S.D."/>
            <person name="Larimer F."/>
            <person name="Keller K.L."/>
            <person name="Rapp-Giles B.J."/>
            <person name="Price M.N."/>
            <person name="Lin M."/>
            <person name="Bruce D.C."/>
            <person name="Detter J.C."/>
            <person name="Tapia R."/>
            <person name="Han C.S."/>
            <person name="Goodwin L.A."/>
            <person name="Cheng J.F."/>
            <person name="Pitluck S."/>
            <person name="Copeland A."/>
            <person name="Lucas S."/>
            <person name="Nolan M."/>
            <person name="Lapidus A.L."/>
            <person name="Palumbo A.V."/>
            <person name="Wall J.D."/>
        </authorList>
    </citation>
    <scope>NUCLEOTIDE SEQUENCE [LARGE SCALE GENOMIC DNA]</scope>
    <source>
        <strain>ATCC BAA-1058 / DSM 17464 / G20</strain>
    </source>
</reference>
<organism>
    <name type="scientific">Oleidesulfovibrio alaskensis (strain ATCC BAA-1058 / DSM 17464 / G20)</name>
    <name type="common">Desulfovibrio alaskensis</name>
    <dbReference type="NCBI Taxonomy" id="207559"/>
    <lineage>
        <taxon>Bacteria</taxon>
        <taxon>Pseudomonadati</taxon>
        <taxon>Thermodesulfobacteriota</taxon>
        <taxon>Desulfovibrionia</taxon>
        <taxon>Desulfovibrionales</taxon>
        <taxon>Desulfovibrionaceae</taxon>
        <taxon>Oleidesulfovibrio</taxon>
    </lineage>
</organism>
<comment type="function">
    <text evidence="1">Catalyzes the attachment of serine to tRNA(Ser). Is also able to aminoacylate tRNA(Sec) with serine, to form the misacylated tRNA L-seryl-tRNA(Sec), which will be further converted into selenocysteinyl-tRNA(Sec).</text>
</comment>
<comment type="catalytic activity">
    <reaction evidence="1">
        <text>tRNA(Ser) + L-serine + ATP = L-seryl-tRNA(Ser) + AMP + diphosphate + H(+)</text>
        <dbReference type="Rhea" id="RHEA:12292"/>
        <dbReference type="Rhea" id="RHEA-COMP:9669"/>
        <dbReference type="Rhea" id="RHEA-COMP:9703"/>
        <dbReference type="ChEBI" id="CHEBI:15378"/>
        <dbReference type="ChEBI" id="CHEBI:30616"/>
        <dbReference type="ChEBI" id="CHEBI:33019"/>
        <dbReference type="ChEBI" id="CHEBI:33384"/>
        <dbReference type="ChEBI" id="CHEBI:78442"/>
        <dbReference type="ChEBI" id="CHEBI:78533"/>
        <dbReference type="ChEBI" id="CHEBI:456215"/>
        <dbReference type="EC" id="6.1.1.11"/>
    </reaction>
</comment>
<comment type="catalytic activity">
    <reaction evidence="1">
        <text>tRNA(Sec) + L-serine + ATP = L-seryl-tRNA(Sec) + AMP + diphosphate + H(+)</text>
        <dbReference type="Rhea" id="RHEA:42580"/>
        <dbReference type="Rhea" id="RHEA-COMP:9742"/>
        <dbReference type="Rhea" id="RHEA-COMP:10128"/>
        <dbReference type="ChEBI" id="CHEBI:15378"/>
        <dbReference type="ChEBI" id="CHEBI:30616"/>
        <dbReference type="ChEBI" id="CHEBI:33019"/>
        <dbReference type="ChEBI" id="CHEBI:33384"/>
        <dbReference type="ChEBI" id="CHEBI:78442"/>
        <dbReference type="ChEBI" id="CHEBI:78533"/>
        <dbReference type="ChEBI" id="CHEBI:456215"/>
        <dbReference type="EC" id="6.1.1.11"/>
    </reaction>
</comment>
<comment type="pathway">
    <text evidence="1">Aminoacyl-tRNA biosynthesis; selenocysteinyl-tRNA(Sec) biosynthesis; L-seryl-tRNA(Sec) from L-serine and tRNA(Sec): step 1/1.</text>
</comment>
<comment type="subunit">
    <text evidence="1">Homodimer. The tRNA molecule binds across the dimer.</text>
</comment>
<comment type="subcellular location">
    <subcellularLocation>
        <location evidence="1">Cytoplasm</location>
    </subcellularLocation>
</comment>
<comment type="domain">
    <text evidence="1">Consists of two distinct domains, a catalytic core and a N-terminal extension that is involved in tRNA binding.</text>
</comment>
<comment type="similarity">
    <text evidence="1">Belongs to the class-II aminoacyl-tRNA synthetase family. Type-1 seryl-tRNA synthetase subfamily.</text>
</comment>
<sequence>MLDLKLLQNNPEVVAEALAKRNSGIDITLFTALDQRRRELLLEVEALKSERNKASGDVARMKRAGENADALIEKLGALSDRIKTLDAETETVKAEVHQWLISLPNIPHESVPAGADENDNVFLHAWGEKPSFDFTPKEHWEIGPALGLDFERGSRLTGSRFTVLWHWAAKLERALTAFFLDVHTREHGYMEVYPPAMVNAQTMTGTGQLPKFEEDLFKLRDSEYYLIPTAEVPLTNLHSGEVVPEEKLPIAYTAQTQCFRSEAGSYGKDTKGFIRQHQFTKVEMVRFAHPEKSFEELEKLRSHAEVLLQKLGLHYRVVTLCSGDMGFSAAKTYDLEVWLPGQDKYREISSCSNCTDFQARRANIRTRLADAKKPVFLHTLNGSGLAVGRTLVAILENYQQADGSVVVPEVLRPYMGGVALLTPDGPF</sequence>
<gene>
    <name evidence="1" type="primary">serS</name>
    <name type="ordered locus">Dde_0196</name>
</gene>